<gene>
    <name evidence="1" type="primary">aroB'</name>
    <name type="ordered locus">Memar_1301</name>
</gene>
<keyword id="KW-0028">Amino-acid biosynthesis</keyword>
<keyword id="KW-0057">Aromatic amino acid biosynthesis</keyword>
<keyword id="KW-0520">NAD</keyword>
<keyword id="KW-0560">Oxidoreductase</keyword>
<organism>
    <name type="scientific">Methanoculleus marisnigri (strain ATCC 35101 / DSM 1498 / JR1)</name>
    <dbReference type="NCBI Taxonomy" id="368407"/>
    <lineage>
        <taxon>Archaea</taxon>
        <taxon>Methanobacteriati</taxon>
        <taxon>Methanobacteriota</taxon>
        <taxon>Stenosarchaea group</taxon>
        <taxon>Methanomicrobia</taxon>
        <taxon>Methanomicrobiales</taxon>
        <taxon>Methanomicrobiaceae</taxon>
        <taxon>Methanoculleus</taxon>
    </lineage>
</organism>
<comment type="function">
    <text evidence="1">Catalyzes the oxidative deamination and cyclization of 2-amino-3,7-dideoxy-D-threo-hept-6-ulosonic acid (ADH) to yield 3-dehydroquinate (DHQ), which is fed into the canonical shikimic pathway of aromatic amino acid biosynthesis.</text>
</comment>
<comment type="catalytic activity">
    <reaction evidence="1">
        <text>2-amino-2,3,7-trideoxy-D-lyxo-hept-6-ulosonate + NAD(+) + H2O = 3-dehydroquinate + NH4(+) + NADH + H(+)</text>
        <dbReference type="Rhea" id="RHEA:25956"/>
        <dbReference type="ChEBI" id="CHEBI:15377"/>
        <dbReference type="ChEBI" id="CHEBI:15378"/>
        <dbReference type="ChEBI" id="CHEBI:28938"/>
        <dbReference type="ChEBI" id="CHEBI:32364"/>
        <dbReference type="ChEBI" id="CHEBI:57540"/>
        <dbReference type="ChEBI" id="CHEBI:57945"/>
        <dbReference type="ChEBI" id="CHEBI:58859"/>
        <dbReference type="EC" id="1.4.1.24"/>
    </reaction>
</comment>
<comment type="similarity">
    <text evidence="1">Belongs to the archaeal-type DHQ synthase family.</text>
</comment>
<sequence>MKLFWVDLRPWRKDLATTAIESGADALVVEDAERVRKLGRVTAIAENGDLVPGKDVFEIEIVDKESEEEALRLSREGLVIVRTGDWTVIPLENLVAQSDRIVAAVGNADEAKVALTVLERGTAGILLATDDPAEVRRVAKTIAGAGASVPLVPFEVTRIVPVGMGDRVCVDTCSILADGEGMLVGNTSSAFLMVHPETLENPYVAPRPFRVNAGAVHAYILLPGGKTAYLADLAVGDRVLVAEHTGPTHDAVVGRVKIERRPLLLVEAKAGDATVSLVLQNAETIRLVREDGTAVSVAALTVGDRVLGSVAEGGRHFGVAVKETILEK</sequence>
<reference key="1">
    <citation type="journal article" date="2009" name="Stand. Genomic Sci.">
        <title>Complete genome sequence of Methanoculleus marisnigri Romesser et al. 1981 type strain JR1.</title>
        <authorList>
            <person name="Anderson I.J."/>
            <person name="Sieprawska-Lupa M."/>
            <person name="Lapidus A."/>
            <person name="Nolan M."/>
            <person name="Copeland A."/>
            <person name="Glavina Del Rio T."/>
            <person name="Tice H."/>
            <person name="Dalin E."/>
            <person name="Barry K."/>
            <person name="Saunders E."/>
            <person name="Han C."/>
            <person name="Brettin T."/>
            <person name="Detter J.C."/>
            <person name="Bruce D."/>
            <person name="Mikhailova N."/>
            <person name="Pitluck S."/>
            <person name="Hauser L."/>
            <person name="Land M."/>
            <person name="Lucas S."/>
            <person name="Richardson P."/>
            <person name="Whitman W.B."/>
            <person name="Kyrpides N.C."/>
        </authorList>
    </citation>
    <scope>NUCLEOTIDE SEQUENCE [LARGE SCALE GENOMIC DNA]</scope>
    <source>
        <strain>ATCC 35101 / DSM 1498 / JR1</strain>
    </source>
</reference>
<proteinExistence type="inferred from homology"/>
<name>DHQS_METMJ</name>
<protein>
    <recommendedName>
        <fullName evidence="1">3-dehydroquinate synthase</fullName>
        <shortName evidence="1">DHQ synthase</shortName>
        <ecNumber evidence="1">1.4.1.24</ecNumber>
    </recommendedName>
    <alternativeName>
        <fullName evidence="1">3-dehydroquinate synthase II</fullName>
    </alternativeName>
</protein>
<feature type="chain" id="PRO_0000372051" description="3-dehydroquinate synthase">
    <location>
        <begin position="1"/>
        <end position="328"/>
    </location>
</feature>
<evidence type="ECO:0000255" key="1">
    <source>
        <dbReference type="HAMAP-Rule" id="MF_01244"/>
    </source>
</evidence>
<dbReference type="EC" id="1.4.1.24" evidence="1"/>
<dbReference type="EMBL" id="CP000562">
    <property type="protein sequence ID" value="ABN57231.1"/>
    <property type="molecule type" value="Genomic_DNA"/>
</dbReference>
<dbReference type="RefSeq" id="WP_011844142.1">
    <property type="nucleotide sequence ID" value="NC_009051.1"/>
</dbReference>
<dbReference type="STRING" id="368407.Memar_1301"/>
<dbReference type="GeneID" id="4847757"/>
<dbReference type="KEGG" id="mem:Memar_1301"/>
<dbReference type="eggNOG" id="arCOG04353">
    <property type="taxonomic scope" value="Archaea"/>
</dbReference>
<dbReference type="HOGENOM" id="CLU_056379_0_0_2"/>
<dbReference type="OrthoDB" id="10265at2157"/>
<dbReference type="Proteomes" id="UP000002146">
    <property type="component" value="Chromosome"/>
</dbReference>
<dbReference type="GO" id="GO:0003856">
    <property type="term" value="F:3-dehydroquinate synthase activity"/>
    <property type="evidence" value="ECO:0007669"/>
    <property type="project" value="InterPro"/>
</dbReference>
<dbReference type="GO" id="GO:0102042">
    <property type="term" value="F:dehydroquinate synthase activity"/>
    <property type="evidence" value="ECO:0007669"/>
    <property type="project" value="UniProtKB-EC"/>
</dbReference>
<dbReference type="GO" id="GO:0051287">
    <property type="term" value="F:NAD binding"/>
    <property type="evidence" value="ECO:0007669"/>
    <property type="project" value="UniProtKB-UniRule"/>
</dbReference>
<dbReference type="GO" id="GO:0008652">
    <property type="term" value="P:amino acid biosynthetic process"/>
    <property type="evidence" value="ECO:0007669"/>
    <property type="project" value="UniProtKB-KW"/>
</dbReference>
<dbReference type="GO" id="GO:0009073">
    <property type="term" value="P:aromatic amino acid family biosynthetic process"/>
    <property type="evidence" value="ECO:0007669"/>
    <property type="project" value="UniProtKB-UniRule"/>
</dbReference>
<dbReference type="HAMAP" id="MF_01244">
    <property type="entry name" value="Arch_DHQ_synthase"/>
    <property type="match status" value="1"/>
</dbReference>
<dbReference type="InterPro" id="IPR002812">
    <property type="entry name" value="DHQ_synth"/>
</dbReference>
<dbReference type="NCBIfam" id="NF002627">
    <property type="entry name" value="PRK02290.1-5"/>
    <property type="match status" value="1"/>
</dbReference>
<dbReference type="PANTHER" id="PTHR33563">
    <property type="match status" value="1"/>
</dbReference>
<dbReference type="PANTHER" id="PTHR33563:SF1">
    <property type="entry name" value="3-DEHYDROQUINATE SYNTHASE"/>
    <property type="match status" value="1"/>
</dbReference>
<dbReference type="Pfam" id="PF01959">
    <property type="entry name" value="DHQS"/>
    <property type="match status" value="1"/>
</dbReference>
<dbReference type="PIRSF" id="PIRSF006655">
    <property type="entry name" value="DHQ_synth"/>
    <property type="match status" value="1"/>
</dbReference>
<accession>A3CV31</accession>